<dbReference type="EC" id="2.8.1.4" evidence="1"/>
<dbReference type="EMBL" id="CP000447">
    <property type="protein sequence ID" value="ABI72625.1"/>
    <property type="molecule type" value="Genomic_DNA"/>
</dbReference>
<dbReference type="RefSeq" id="WP_011638234.1">
    <property type="nucleotide sequence ID" value="NC_008345.1"/>
</dbReference>
<dbReference type="SMR" id="Q07ZD9"/>
<dbReference type="STRING" id="318167.Sfri_2785"/>
<dbReference type="KEGG" id="sfr:Sfri_2785"/>
<dbReference type="eggNOG" id="COG0301">
    <property type="taxonomic scope" value="Bacteria"/>
</dbReference>
<dbReference type="eggNOG" id="COG0607">
    <property type="taxonomic scope" value="Bacteria"/>
</dbReference>
<dbReference type="HOGENOM" id="CLU_037952_4_1_6"/>
<dbReference type="OrthoDB" id="9773948at2"/>
<dbReference type="UniPathway" id="UPA00060"/>
<dbReference type="Proteomes" id="UP000000684">
    <property type="component" value="Chromosome"/>
</dbReference>
<dbReference type="GO" id="GO:0005829">
    <property type="term" value="C:cytosol"/>
    <property type="evidence" value="ECO:0007669"/>
    <property type="project" value="TreeGrafter"/>
</dbReference>
<dbReference type="GO" id="GO:0005524">
    <property type="term" value="F:ATP binding"/>
    <property type="evidence" value="ECO:0007669"/>
    <property type="project" value="UniProtKB-UniRule"/>
</dbReference>
<dbReference type="GO" id="GO:0004810">
    <property type="term" value="F:CCA tRNA nucleotidyltransferase activity"/>
    <property type="evidence" value="ECO:0007669"/>
    <property type="project" value="InterPro"/>
</dbReference>
<dbReference type="GO" id="GO:0000049">
    <property type="term" value="F:tRNA binding"/>
    <property type="evidence" value="ECO:0007669"/>
    <property type="project" value="UniProtKB-UniRule"/>
</dbReference>
<dbReference type="GO" id="GO:0140741">
    <property type="term" value="F:tRNA-uracil-4 sulfurtransferase activity"/>
    <property type="evidence" value="ECO:0007669"/>
    <property type="project" value="UniProtKB-EC"/>
</dbReference>
<dbReference type="GO" id="GO:0009228">
    <property type="term" value="P:thiamine biosynthetic process"/>
    <property type="evidence" value="ECO:0007669"/>
    <property type="project" value="UniProtKB-KW"/>
</dbReference>
<dbReference type="GO" id="GO:0009229">
    <property type="term" value="P:thiamine diphosphate biosynthetic process"/>
    <property type="evidence" value="ECO:0007669"/>
    <property type="project" value="UniProtKB-UniRule"/>
</dbReference>
<dbReference type="GO" id="GO:0052837">
    <property type="term" value="P:thiazole biosynthetic process"/>
    <property type="evidence" value="ECO:0007669"/>
    <property type="project" value="InterPro"/>
</dbReference>
<dbReference type="GO" id="GO:0002937">
    <property type="term" value="P:tRNA 4-thiouridine biosynthesis"/>
    <property type="evidence" value="ECO:0007669"/>
    <property type="project" value="TreeGrafter"/>
</dbReference>
<dbReference type="CDD" id="cd01712">
    <property type="entry name" value="PPase_ThiI"/>
    <property type="match status" value="1"/>
</dbReference>
<dbReference type="CDD" id="cd00158">
    <property type="entry name" value="RHOD"/>
    <property type="match status" value="1"/>
</dbReference>
<dbReference type="CDD" id="cd11716">
    <property type="entry name" value="THUMP_ThiI"/>
    <property type="match status" value="1"/>
</dbReference>
<dbReference type="FunFam" id="3.40.50.620:FF:000029">
    <property type="entry name" value="tRNA sulfurtransferase"/>
    <property type="match status" value="1"/>
</dbReference>
<dbReference type="Gene3D" id="3.30.2130.30">
    <property type="match status" value="1"/>
</dbReference>
<dbReference type="Gene3D" id="3.40.50.620">
    <property type="entry name" value="HUPs"/>
    <property type="match status" value="1"/>
</dbReference>
<dbReference type="Gene3D" id="3.40.250.10">
    <property type="entry name" value="Rhodanese-like domain"/>
    <property type="match status" value="1"/>
</dbReference>
<dbReference type="HAMAP" id="MF_00021">
    <property type="entry name" value="ThiI"/>
    <property type="match status" value="1"/>
</dbReference>
<dbReference type="InterPro" id="IPR001763">
    <property type="entry name" value="Rhodanese-like_dom"/>
</dbReference>
<dbReference type="InterPro" id="IPR036873">
    <property type="entry name" value="Rhodanese-like_dom_sf"/>
</dbReference>
<dbReference type="InterPro" id="IPR014729">
    <property type="entry name" value="Rossmann-like_a/b/a_fold"/>
</dbReference>
<dbReference type="InterPro" id="IPR020536">
    <property type="entry name" value="ThiI_AANH"/>
</dbReference>
<dbReference type="InterPro" id="IPR054173">
    <property type="entry name" value="ThiI_fer"/>
</dbReference>
<dbReference type="InterPro" id="IPR049961">
    <property type="entry name" value="ThiI_N"/>
</dbReference>
<dbReference type="InterPro" id="IPR026340">
    <property type="entry name" value="THII_Thiazole_biosynth_dom"/>
</dbReference>
<dbReference type="InterPro" id="IPR004114">
    <property type="entry name" value="THUMP_dom"/>
</dbReference>
<dbReference type="InterPro" id="IPR049962">
    <property type="entry name" value="THUMP_ThiI"/>
</dbReference>
<dbReference type="InterPro" id="IPR003720">
    <property type="entry name" value="tRNA_STrfase"/>
</dbReference>
<dbReference type="InterPro" id="IPR050102">
    <property type="entry name" value="tRNA_sulfurtransferase_ThiI"/>
</dbReference>
<dbReference type="NCBIfam" id="TIGR04271">
    <property type="entry name" value="ThiI_C_thiazole"/>
    <property type="match status" value="1"/>
</dbReference>
<dbReference type="NCBIfam" id="TIGR00342">
    <property type="entry name" value="tRNA uracil 4-sulfurtransferase ThiI"/>
    <property type="match status" value="1"/>
</dbReference>
<dbReference type="PANTHER" id="PTHR43209">
    <property type="entry name" value="TRNA SULFURTRANSFERASE"/>
    <property type="match status" value="1"/>
</dbReference>
<dbReference type="PANTHER" id="PTHR43209:SF1">
    <property type="entry name" value="TRNA SULFURTRANSFERASE"/>
    <property type="match status" value="1"/>
</dbReference>
<dbReference type="Pfam" id="PF00581">
    <property type="entry name" value="Rhodanese"/>
    <property type="match status" value="1"/>
</dbReference>
<dbReference type="Pfam" id="PF02568">
    <property type="entry name" value="ThiI"/>
    <property type="match status" value="1"/>
</dbReference>
<dbReference type="Pfam" id="PF22025">
    <property type="entry name" value="ThiI_fer"/>
    <property type="match status" value="1"/>
</dbReference>
<dbReference type="Pfam" id="PF02926">
    <property type="entry name" value="THUMP"/>
    <property type="match status" value="1"/>
</dbReference>
<dbReference type="SMART" id="SM00981">
    <property type="entry name" value="THUMP"/>
    <property type="match status" value="1"/>
</dbReference>
<dbReference type="SUPFAM" id="SSF52402">
    <property type="entry name" value="Adenine nucleotide alpha hydrolases-like"/>
    <property type="match status" value="1"/>
</dbReference>
<dbReference type="SUPFAM" id="SSF52821">
    <property type="entry name" value="Rhodanese/Cell cycle control phosphatase"/>
    <property type="match status" value="1"/>
</dbReference>
<dbReference type="SUPFAM" id="SSF143437">
    <property type="entry name" value="THUMP domain-like"/>
    <property type="match status" value="1"/>
</dbReference>
<dbReference type="PROSITE" id="PS50206">
    <property type="entry name" value="RHODANESE_3"/>
    <property type="match status" value="1"/>
</dbReference>
<dbReference type="PROSITE" id="PS51165">
    <property type="entry name" value="THUMP"/>
    <property type="match status" value="1"/>
</dbReference>
<feature type="chain" id="PRO_1000074267" description="tRNA sulfurtransferase">
    <location>
        <begin position="1"/>
        <end position="484"/>
    </location>
</feature>
<feature type="domain" description="THUMP" evidence="1">
    <location>
        <begin position="63"/>
        <end position="167"/>
    </location>
</feature>
<feature type="domain" description="Rhodanese" evidence="1">
    <location>
        <begin position="406"/>
        <end position="484"/>
    </location>
</feature>
<feature type="active site" description="Cysteine persulfide intermediate" evidence="1">
    <location>
        <position position="458"/>
    </location>
</feature>
<feature type="binding site" evidence="1">
    <location>
        <begin position="185"/>
        <end position="186"/>
    </location>
    <ligand>
        <name>ATP</name>
        <dbReference type="ChEBI" id="CHEBI:30616"/>
    </ligand>
</feature>
<feature type="binding site" evidence="1">
    <location>
        <position position="267"/>
    </location>
    <ligand>
        <name>ATP</name>
        <dbReference type="ChEBI" id="CHEBI:30616"/>
    </ligand>
</feature>
<feature type="binding site" evidence="1">
    <location>
        <position position="289"/>
    </location>
    <ligand>
        <name>ATP</name>
        <dbReference type="ChEBI" id="CHEBI:30616"/>
    </ligand>
</feature>
<feature type="binding site" evidence="1">
    <location>
        <position position="298"/>
    </location>
    <ligand>
        <name>ATP</name>
        <dbReference type="ChEBI" id="CHEBI:30616"/>
    </ligand>
</feature>
<feature type="disulfide bond" description="Redox-active" evidence="1">
    <location>
        <begin position="346"/>
        <end position="458"/>
    </location>
</feature>
<sequence>MKFIVKLYPEIMMKSKSVRMRFTKMLETNIRNVLKNVDEGAKVQRLYDRIIVQVPSDKPELCDVFADRLACIPGIAHVVQVSEYSFDSIDHIYQQALPKYRDEIAGKTFCVRVKRSGNHDFNSIDVERYVGGGLNQHTEALGVKLKDPDVTVNLEINQDKLYMVERRIQGLGGFPMATQEDVLSLISGGFDSGVSSFQFIKKGARTHYCFFNLGGAQHEIGVKQVAYHLWKKYGESHKVRFVSVPFEPVVEEILERIDNGQMGVVLKRVMMRAATRIADKYGIQALVTGESLGQVSSQTLTNLNVIDRSTDLLILRPLIAMDKQDIINQSRIIGTEDFAKSIPEYCGVISQKPTVKAVLSKVEAEELKFSEDLIDRVVASAVVMDIRDIEAEMNQQVTETETVKDVASGEIIIDVRAPEEEERSPLLIDNVMVKAIPFFKLATQFADLDKSKTYLLYCDRGVMSKLQALYLVEQGYTNVKVYRP</sequence>
<name>THII_SHEFN</name>
<accession>Q07ZD9</accession>
<reference key="1">
    <citation type="submission" date="2006-08" db="EMBL/GenBank/DDBJ databases">
        <title>Complete sequence of Shewanella frigidimarina NCIMB 400.</title>
        <authorList>
            <consortium name="US DOE Joint Genome Institute"/>
            <person name="Copeland A."/>
            <person name="Lucas S."/>
            <person name="Lapidus A."/>
            <person name="Barry K."/>
            <person name="Detter J.C."/>
            <person name="Glavina del Rio T."/>
            <person name="Hammon N."/>
            <person name="Israni S."/>
            <person name="Dalin E."/>
            <person name="Tice H."/>
            <person name="Pitluck S."/>
            <person name="Fredrickson J.K."/>
            <person name="Kolker E."/>
            <person name="McCuel L.A."/>
            <person name="DiChristina T."/>
            <person name="Nealson K.H."/>
            <person name="Newman D."/>
            <person name="Tiedje J.M."/>
            <person name="Zhou J."/>
            <person name="Romine M.F."/>
            <person name="Culley D.E."/>
            <person name="Serres M."/>
            <person name="Chertkov O."/>
            <person name="Brettin T."/>
            <person name="Bruce D."/>
            <person name="Han C."/>
            <person name="Tapia R."/>
            <person name="Gilna P."/>
            <person name="Schmutz J."/>
            <person name="Larimer F."/>
            <person name="Land M."/>
            <person name="Hauser L."/>
            <person name="Kyrpides N."/>
            <person name="Mikhailova N."/>
            <person name="Richardson P."/>
        </authorList>
    </citation>
    <scope>NUCLEOTIDE SEQUENCE [LARGE SCALE GENOMIC DNA]</scope>
    <source>
        <strain>NCIMB 400</strain>
    </source>
</reference>
<organism>
    <name type="scientific">Shewanella frigidimarina (strain NCIMB 400)</name>
    <dbReference type="NCBI Taxonomy" id="318167"/>
    <lineage>
        <taxon>Bacteria</taxon>
        <taxon>Pseudomonadati</taxon>
        <taxon>Pseudomonadota</taxon>
        <taxon>Gammaproteobacteria</taxon>
        <taxon>Alteromonadales</taxon>
        <taxon>Shewanellaceae</taxon>
        <taxon>Shewanella</taxon>
    </lineage>
</organism>
<protein>
    <recommendedName>
        <fullName evidence="1">tRNA sulfurtransferase</fullName>
        <ecNumber evidence="1">2.8.1.4</ecNumber>
    </recommendedName>
    <alternativeName>
        <fullName evidence="1">Sulfur carrier protein ThiS sulfurtransferase</fullName>
    </alternativeName>
    <alternativeName>
        <fullName evidence="1">Thiamine biosynthesis protein ThiI</fullName>
    </alternativeName>
    <alternativeName>
        <fullName evidence="1">tRNA 4-thiouridine synthase</fullName>
    </alternativeName>
</protein>
<gene>
    <name evidence="1" type="primary">thiI</name>
    <name type="ordered locus">Sfri_2785</name>
</gene>
<evidence type="ECO:0000255" key="1">
    <source>
        <dbReference type="HAMAP-Rule" id="MF_00021"/>
    </source>
</evidence>
<proteinExistence type="inferred from homology"/>
<keyword id="KW-0067">ATP-binding</keyword>
<keyword id="KW-0963">Cytoplasm</keyword>
<keyword id="KW-1015">Disulfide bond</keyword>
<keyword id="KW-0547">Nucleotide-binding</keyword>
<keyword id="KW-0676">Redox-active center</keyword>
<keyword id="KW-1185">Reference proteome</keyword>
<keyword id="KW-0694">RNA-binding</keyword>
<keyword id="KW-0784">Thiamine biosynthesis</keyword>
<keyword id="KW-0808">Transferase</keyword>
<keyword id="KW-0820">tRNA-binding</keyword>
<comment type="function">
    <text evidence="1">Catalyzes the ATP-dependent transfer of a sulfur to tRNA to produce 4-thiouridine in position 8 of tRNAs, which functions as a near-UV photosensor. Also catalyzes the transfer of sulfur to the sulfur carrier protein ThiS, forming ThiS-thiocarboxylate. This is a step in the synthesis of thiazole, in the thiamine biosynthesis pathway. The sulfur is donated as persulfide by IscS.</text>
</comment>
<comment type="catalytic activity">
    <reaction evidence="1">
        <text>[ThiI sulfur-carrier protein]-S-sulfanyl-L-cysteine + a uridine in tRNA + 2 reduced [2Fe-2S]-[ferredoxin] + ATP + H(+) = [ThiI sulfur-carrier protein]-L-cysteine + a 4-thiouridine in tRNA + 2 oxidized [2Fe-2S]-[ferredoxin] + AMP + diphosphate</text>
        <dbReference type="Rhea" id="RHEA:24176"/>
        <dbReference type="Rhea" id="RHEA-COMP:10000"/>
        <dbReference type="Rhea" id="RHEA-COMP:10001"/>
        <dbReference type="Rhea" id="RHEA-COMP:13337"/>
        <dbReference type="Rhea" id="RHEA-COMP:13338"/>
        <dbReference type="Rhea" id="RHEA-COMP:13339"/>
        <dbReference type="Rhea" id="RHEA-COMP:13340"/>
        <dbReference type="ChEBI" id="CHEBI:15378"/>
        <dbReference type="ChEBI" id="CHEBI:29950"/>
        <dbReference type="ChEBI" id="CHEBI:30616"/>
        <dbReference type="ChEBI" id="CHEBI:33019"/>
        <dbReference type="ChEBI" id="CHEBI:33737"/>
        <dbReference type="ChEBI" id="CHEBI:33738"/>
        <dbReference type="ChEBI" id="CHEBI:61963"/>
        <dbReference type="ChEBI" id="CHEBI:65315"/>
        <dbReference type="ChEBI" id="CHEBI:136798"/>
        <dbReference type="ChEBI" id="CHEBI:456215"/>
        <dbReference type="EC" id="2.8.1.4"/>
    </reaction>
</comment>
<comment type="catalytic activity">
    <reaction evidence="1">
        <text>[ThiS sulfur-carrier protein]-C-terminal Gly-Gly-AMP + S-sulfanyl-L-cysteinyl-[cysteine desulfurase] + AH2 = [ThiS sulfur-carrier protein]-C-terminal-Gly-aminoethanethioate + L-cysteinyl-[cysteine desulfurase] + A + AMP + 2 H(+)</text>
        <dbReference type="Rhea" id="RHEA:43340"/>
        <dbReference type="Rhea" id="RHEA-COMP:12157"/>
        <dbReference type="Rhea" id="RHEA-COMP:12158"/>
        <dbReference type="Rhea" id="RHEA-COMP:12910"/>
        <dbReference type="Rhea" id="RHEA-COMP:19908"/>
        <dbReference type="ChEBI" id="CHEBI:13193"/>
        <dbReference type="ChEBI" id="CHEBI:15378"/>
        <dbReference type="ChEBI" id="CHEBI:17499"/>
        <dbReference type="ChEBI" id="CHEBI:29950"/>
        <dbReference type="ChEBI" id="CHEBI:61963"/>
        <dbReference type="ChEBI" id="CHEBI:90618"/>
        <dbReference type="ChEBI" id="CHEBI:232372"/>
        <dbReference type="ChEBI" id="CHEBI:456215"/>
    </reaction>
</comment>
<comment type="pathway">
    <text evidence="1">Cofactor biosynthesis; thiamine diphosphate biosynthesis.</text>
</comment>
<comment type="subcellular location">
    <subcellularLocation>
        <location evidence="1">Cytoplasm</location>
    </subcellularLocation>
</comment>
<comment type="similarity">
    <text evidence="1">Belongs to the ThiI family.</text>
</comment>